<accession>B2ISX5</accession>
<sequence>MRDRISAFLEEKQGLSVNSKQSYKYDLEQFLDMVGERISETSLKIYQAQLANLKISAQKRKISACNQFLYFLYQKGEVDSFYRLELAKQAEKKTEKPEILYLDSFWQESDHPEGRLLALLILEMGLLPSEILAIKVADINLDFQVLRISKASQQRIVTIPTALLSELEPLMGQTYLFERGGKPYSRQWAFRQLESFVKEKGFPSLSAQVLREQFILRQIENKVDLYEIAKKLGLKTVLTLEKYR</sequence>
<protein>
    <recommendedName>
        <fullName evidence="1">Tyrosine recombinase XerD-like</fullName>
    </recommendedName>
</protein>
<name>XERDL_STRPS</name>
<dbReference type="EMBL" id="CP001033">
    <property type="protein sequence ID" value="ACB91102.1"/>
    <property type="status" value="ALT_INIT"/>
    <property type="molecule type" value="Genomic_DNA"/>
</dbReference>
<dbReference type="SMR" id="B2ISX5"/>
<dbReference type="KEGG" id="spw:SPCG_1850"/>
<dbReference type="HOGENOM" id="CLU_1128554_0_0_9"/>
<dbReference type="GO" id="GO:0005737">
    <property type="term" value="C:cytoplasm"/>
    <property type="evidence" value="ECO:0007669"/>
    <property type="project" value="UniProtKB-SubCell"/>
</dbReference>
<dbReference type="GO" id="GO:0003677">
    <property type="term" value="F:DNA binding"/>
    <property type="evidence" value="ECO:0007669"/>
    <property type="project" value="UniProtKB-KW"/>
</dbReference>
<dbReference type="GO" id="GO:0009037">
    <property type="term" value="F:tyrosine-based site-specific recombinase activity"/>
    <property type="evidence" value="ECO:0007669"/>
    <property type="project" value="UniProtKB-UniRule"/>
</dbReference>
<dbReference type="GO" id="GO:0006313">
    <property type="term" value="P:DNA transposition"/>
    <property type="evidence" value="ECO:0007669"/>
    <property type="project" value="UniProtKB-UniRule"/>
</dbReference>
<dbReference type="CDD" id="cd01190">
    <property type="entry name" value="INT_StrepXerD_C_like"/>
    <property type="match status" value="1"/>
</dbReference>
<dbReference type="Gene3D" id="1.10.150.130">
    <property type="match status" value="1"/>
</dbReference>
<dbReference type="Gene3D" id="1.10.443.10">
    <property type="entry name" value="Intergrase catalytic core"/>
    <property type="match status" value="1"/>
</dbReference>
<dbReference type="HAMAP" id="MF_01817">
    <property type="entry name" value="Recomb_XerD_like"/>
    <property type="match status" value="1"/>
</dbReference>
<dbReference type="InterPro" id="IPR044068">
    <property type="entry name" value="CB"/>
</dbReference>
<dbReference type="InterPro" id="IPR011010">
    <property type="entry name" value="DNA_brk_join_enz"/>
</dbReference>
<dbReference type="InterPro" id="IPR013762">
    <property type="entry name" value="Integrase-like_cat_sf"/>
</dbReference>
<dbReference type="InterPro" id="IPR002104">
    <property type="entry name" value="Integrase_catalytic"/>
</dbReference>
<dbReference type="InterPro" id="IPR010998">
    <property type="entry name" value="Integrase_recombinase_N"/>
</dbReference>
<dbReference type="InterPro" id="IPR004107">
    <property type="entry name" value="Integrase_SAM-like_N"/>
</dbReference>
<dbReference type="InterPro" id="IPR020876">
    <property type="entry name" value="Tyrosine_recombinase_XerD-like"/>
</dbReference>
<dbReference type="NCBIfam" id="NF002685">
    <property type="entry name" value="PRK02436.1"/>
    <property type="match status" value="1"/>
</dbReference>
<dbReference type="Pfam" id="PF02899">
    <property type="entry name" value="Phage_int_SAM_1"/>
    <property type="match status" value="1"/>
</dbReference>
<dbReference type="Pfam" id="PF00589">
    <property type="entry name" value="Phage_integrase"/>
    <property type="match status" value="1"/>
</dbReference>
<dbReference type="SUPFAM" id="SSF56349">
    <property type="entry name" value="DNA breaking-rejoining enzymes"/>
    <property type="match status" value="1"/>
</dbReference>
<dbReference type="PROSITE" id="PS51900">
    <property type="entry name" value="CB"/>
    <property type="match status" value="1"/>
</dbReference>
<dbReference type="PROSITE" id="PS51898">
    <property type="entry name" value="TYR_RECOMBINASE"/>
    <property type="match status" value="1"/>
</dbReference>
<proteinExistence type="inferred from homology"/>
<comment type="function">
    <text evidence="1">Putative tyrosine recombinase. Not involved in the cutting and rejoining of the recombining DNA molecules on dif(SL) site.</text>
</comment>
<comment type="subcellular location">
    <subcellularLocation>
        <location evidence="1">Cytoplasm</location>
    </subcellularLocation>
</comment>
<comment type="similarity">
    <text evidence="1">Belongs to the 'phage' integrase family. XerD-like subfamily.</text>
</comment>
<comment type="sequence caution" evidence="4">
    <conflict type="erroneous initiation">
        <sequence resource="EMBL-CDS" id="ACB91102"/>
    </conflict>
</comment>
<keyword id="KW-0963">Cytoplasm</keyword>
<keyword id="KW-0229">DNA integration</keyword>
<keyword id="KW-0233">DNA recombination</keyword>
<keyword id="KW-0238">DNA-binding</keyword>
<reference key="1">
    <citation type="journal article" date="2009" name="BMC Genomics">
        <title>Genome evolution driven by host adaptations results in a more virulent and antimicrobial-resistant Streptococcus pneumoniae serotype 14.</title>
        <authorList>
            <person name="Ding F."/>
            <person name="Tang P."/>
            <person name="Hsu M.-H."/>
            <person name="Cui P."/>
            <person name="Hu S."/>
            <person name="Yu J."/>
            <person name="Chiu C.-H."/>
        </authorList>
    </citation>
    <scope>NUCLEOTIDE SEQUENCE [LARGE SCALE GENOMIC DNA]</scope>
    <source>
        <strain>CGSP14</strain>
    </source>
</reference>
<evidence type="ECO:0000255" key="1">
    <source>
        <dbReference type="HAMAP-Rule" id="MF_01817"/>
    </source>
</evidence>
<evidence type="ECO:0000255" key="2">
    <source>
        <dbReference type="PROSITE-ProRule" id="PRU01246"/>
    </source>
</evidence>
<evidence type="ECO:0000255" key="3">
    <source>
        <dbReference type="PROSITE-ProRule" id="PRU01248"/>
    </source>
</evidence>
<evidence type="ECO:0000305" key="4"/>
<feature type="chain" id="PRO_0000355191" description="Tyrosine recombinase XerD-like">
    <location>
        <begin position="1"/>
        <end position="244"/>
    </location>
</feature>
<feature type="domain" description="Core-binding (CB)" evidence="3">
    <location>
        <begin position="1"/>
        <end position="73"/>
    </location>
</feature>
<feature type="domain" description="Tyr recombinase" evidence="2">
    <location>
        <begin position="90"/>
        <end position="244"/>
    </location>
</feature>
<feature type="active site" evidence="2">
    <location>
        <position position="150"/>
    </location>
</feature>
<feature type="active site" evidence="2">
    <location>
        <position position="211"/>
    </location>
</feature>
<feature type="active site" description="O-(3'-phospho-DNA)-tyrosine intermediate" evidence="2">
    <location>
        <position position="243"/>
    </location>
</feature>
<organism>
    <name type="scientific">Streptococcus pneumoniae (strain CGSP14)</name>
    <dbReference type="NCBI Taxonomy" id="516950"/>
    <lineage>
        <taxon>Bacteria</taxon>
        <taxon>Bacillati</taxon>
        <taxon>Bacillota</taxon>
        <taxon>Bacilli</taxon>
        <taxon>Lactobacillales</taxon>
        <taxon>Streptococcaceae</taxon>
        <taxon>Streptococcus</taxon>
    </lineage>
</organism>
<gene>
    <name type="ordered locus">SPCG_1850</name>
</gene>